<feature type="chain" id="PRO_1000048008" description="Protein RecA">
    <location>
        <begin position="1"/>
        <end position="347"/>
    </location>
</feature>
<feature type="region of interest" description="Disordered" evidence="2">
    <location>
        <begin position="325"/>
        <end position="347"/>
    </location>
</feature>
<feature type="compositionally biased region" description="Basic and acidic residues" evidence="2">
    <location>
        <begin position="338"/>
        <end position="347"/>
    </location>
</feature>
<feature type="binding site" evidence="1">
    <location>
        <begin position="65"/>
        <end position="72"/>
    </location>
    <ligand>
        <name>ATP</name>
        <dbReference type="ChEBI" id="CHEBI:30616"/>
    </ligand>
</feature>
<sequence length="347" mass="37657">MDNDRQKALDTVIKNMEKSFGKGAVMKLGDNIGRRVSTTSTGSVTLDNALGVGGYPKGRIIEIYGPESSGKTTVALHAIAEVQSNGGVAAFIDAEHALDPEYAQALGVDIDNLYLSQPDHGEQGLEIAEAFVRSGAVDIVVVDSVAALTPKAEIEGEMGDTHVGLQARLMSQALRKLSGAISKSNTTAIFINQIREKVGVMFGNPETTPGGRALKFYSSVRLEVRRAEQLKQGQEIVGNRTKIKVVKNKVAPPFRVAEVDIMYGQGISKEGELIDLGVENDIVDKSGAWYSYNGERMGQGKENVKMYLKENPQIKEEIDRKLREKLGISDGDVEETEDAPKSLFDEE</sequence>
<keyword id="KW-0067">ATP-binding</keyword>
<keyword id="KW-0963">Cytoplasm</keyword>
<keyword id="KW-0227">DNA damage</keyword>
<keyword id="KW-0233">DNA recombination</keyword>
<keyword id="KW-0234">DNA repair</keyword>
<keyword id="KW-0238">DNA-binding</keyword>
<keyword id="KW-0547">Nucleotide-binding</keyword>
<keyword id="KW-0742">SOS response</keyword>
<evidence type="ECO:0000255" key="1">
    <source>
        <dbReference type="HAMAP-Rule" id="MF_00268"/>
    </source>
</evidence>
<evidence type="ECO:0000256" key="2">
    <source>
        <dbReference type="SAM" id="MobiDB-lite"/>
    </source>
</evidence>
<name>RECA_STAAB</name>
<comment type="function">
    <text evidence="1">Can catalyze the hydrolysis of ATP in the presence of single-stranded DNA, the ATP-dependent uptake of single-stranded DNA by duplex DNA, and the ATP-dependent hybridization of homologous single-stranded DNAs. It interacts with LexA causing its activation and leading to its autocatalytic cleavage.</text>
</comment>
<comment type="subcellular location">
    <subcellularLocation>
        <location evidence="1">Cytoplasm</location>
    </subcellularLocation>
</comment>
<comment type="similarity">
    <text evidence="1">Belongs to the RecA family.</text>
</comment>
<protein>
    <recommendedName>
        <fullName evidence="1">Protein RecA</fullName>
    </recommendedName>
    <alternativeName>
        <fullName evidence="1">Recombinase A</fullName>
    </alternativeName>
</protein>
<accession>Q2YXN2</accession>
<proteinExistence type="inferred from homology"/>
<organism>
    <name type="scientific">Staphylococcus aureus (strain bovine RF122 / ET3-1)</name>
    <dbReference type="NCBI Taxonomy" id="273036"/>
    <lineage>
        <taxon>Bacteria</taxon>
        <taxon>Bacillati</taxon>
        <taxon>Bacillota</taxon>
        <taxon>Bacilli</taxon>
        <taxon>Bacillales</taxon>
        <taxon>Staphylococcaceae</taxon>
        <taxon>Staphylococcus</taxon>
    </lineage>
</organism>
<reference key="1">
    <citation type="journal article" date="2007" name="PLoS ONE">
        <title>Molecular correlates of host specialization in Staphylococcus aureus.</title>
        <authorList>
            <person name="Herron-Olson L."/>
            <person name="Fitzgerald J.R."/>
            <person name="Musser J.M."/>
            <person name="Kapur V."/>
        </authorList>
    </citation>
    <scope>NUCLEOTIDE SEQUENCE [LARGE SCALE GENOMIC DNA]</scope>
    <source>
        <strain>bovine RF122 / ET3-1</strain>
    </source>
</reference>
<gene>
    <name evidence="1" type="primary">recA</name>
    <name type="ordered locus">SAB1147</name>
</gene>
<dbReference type="EMBL" id="AJ938182">
    <property type="protein sequence ID" value="CAI80836.1"/>
    <property type="molecule type" value="Genomic_DNA"/>
</dbReference>
<dbReference type="RefSeq" id="WP_000368166.1">
    <property type="nucleotide sequence ID" value="NC_007622.1"/>
</dbReference>
<dbReference type="SMR" id="Q2YXN2"/>
<dbReference type="KEGG" id="sab:SAB1147"/>
<dbReference type="HOGENOM" id="CLU_040469_1_2_9"/>
<dbReference type="GO" id="GO:0005829">
    <property type="term" value="C:cytosol"/>
    <property type="evidence" value="ECO:0007669"/>
    <property type="project" value="TreeGrafter"/>
</dbReference>
<dbReference type="GO" id="GO:0005524">
    <property type="term" value="F:ATP binding"/>
    <property type="evidence" value="ECO:0007669"/>
    <property type="project" value="UniProtKB-UniRule"/>
</dbReference>
<dbReference type="GO" id="GO:0016887">
    <property type="term" value="F:ATP hydrolysis activity"/>
    <property type="evidence" value="ECO:0007669"/>
    <property type="project" value="InterPro"/>
</dbReference>
<dbReference type="GO" id="GO:0140664">
    <property type="term" value="F:ATP-dependent DNA damage sensor activity"/>
    <property type="evidence" value="ECO:0007669"/>
    <property type="project" value="InterPro"/>
</dbReference>
<dbReference type="GO" id="GO:0003684">
    <property type="term" value="F:damaged DNA binding"/>
    <property type="evidence" value="ECO:0007669"/>
    <property type="project" value="UniProtKB-UniRule"/>
</dbReference>
<dbReference type="GO" id="GO:0003697">
    <property type="term" value="F:single-stranded DNA binding"/>
    <property type="evidence" value="ECO:0007669"/>
    <property type="project" value="UniProtKB-UniRule"/>
</dbReference>
<dbReference type="GO" id="GO:0006310">
    <property type="term" value="P:DNA recombination"/>
    <property type="evidence" value="ECO:0007669"/>
    <property type="project" value="UniProtKB-UniRule"/>
</dbReference>
<dbReference type="GO" id="GO:0006281">
    <property type="term" value="P:DNA repair"/>
    <property type="evidence" value="ECO:0007669"/>
    <property type="project" value="UniProtKB-UniRule"/>
</dbReference>
<dbReference type="GO" id="GO:0009432">
    <property type="term" value="P:SOS response"/>
    <property type="evidence" value="ECO:0007669"/>
    <property type="project" value="UniProtKB-UniRule"/>
</dbReference>
<dbReference type="CDD" id="cd00983">
    <property type="entry name" value="RecA"/>
    <property type="match status" value="1"/>
</dbReference>
<dbReference type="FunFam" id="3.40.50.300:FF:000087">
    <property type="entry name" value="Recombinase RecA"/>
    <property type="match status" value="1"/>
</dbReference>
<dbReference type="Gene3D" id="3.40.50.300">
    <property type="entry name" value="P-loop containing nucleotide triphosphate hydrolases"/>
    <property type="match status" value="1"/>
</dbReference>
<dbReference type="HAMAP" id="MF_00268">
    <property type="entry name" value="RecA"/>
    <property type="match status" value="1"/>
</dbReference>
<dbReference type="InterPro" id="IPR003593">
    <property type="entry name" value="AAA+_ATPase"/>
</dbReference>
<dbReference type="InterPro" id="IPR013765">
    <property type="entry name" value="DNA_recomb/repair_RecA"/>
</dbReference>
<dbReference type="InterPro" id="IPR020584">
    <property type="entry name" value="DNA_recomb/repair_RecA_CS"/>
</dbReference>
<dbReference type="InterPro" id="IPR027417">
    <property type="entry name" value="P-loop_NTPase"/>
</dbReference>
<dbReference type="InterPro" id="IPR049261">
    <property type="entry name" value="RecA-like_C"/>
</dbReference>
<dbReference type="InterPro" id="IPR049428">
    <property type="entry name" value="RecA-like_N"/>
</dbReference>
<dbReference type="InterPro" id="IPR020588">
    <property type="entry name" value="RecA_ATP-bd"/>
</dbReference>
<dbReference type="InterPro" id="IPR023400">
    <property type="entry name" value="RecA_C_sf"/>
</dbReference>
<dbReference type="InterPro" id="IPR020587">
    <property type="entry name" value="RecA_monomer-monomer_interface"/>
</dbReference>
<dbReference type="NCBIfam" id="TIGR02012">
    <property type="entry name" value="tigrfam_recA"/>
    <property type="match status" value="1"/>
</dbReference>
<dbReference type="PANTHER" id="PTHR45900:SF1">
    <property type="entry name" value="MITOCHONDRIAL DNA REPAIR PROTEIN RECA HOMOLOG-RELATED"/>
    <property type="match status" value="1"/>
</dbReference>
<dbReference type="PANTHER" id="PTHR45900">
    <property type="entry name" value="RECA"/>
    <property type="match status" value="1"/>
</dbReference>
<dbReference type="Pfam" id="PF00154">
    <property type="entry name" value="RecA"/>
    <property type="match status" value="1"/>
</dbReference>
<dbReference type="Pfam" id="PF21096">
    <property type="entry name" value="RecA_C"/>
    <property type="match status" value="1"/>
</dbReference>
<dbReference type="PRINTS" id="PR00142">
    <property type="entry name" value="RECA"/>
</dbReference>
<dbReference type="SMART" id="SM00382">
    <property type="entry name" value="AAA"/>
    <property type="match status" value="1"/>
</dbReference>
<dbReference type="SUPFAM" id="SSF52540">
    <property type="entry name" value="P-loop containing nucleoside triphosphate hydrolases"/>
    <property type="match status" value="1"/>
</dbReference>
<dbReference type="SUPFAM" id="SSF54752">
    <property type="entry name" value="RecA protein, C-terminal domain"/>
    <property type="match status" value="1"/>
</dbReference>
<dbReference type="PROSITE" id="PS00321">
    <property type="entry name" value="RECA_1"/>
    <property type="match status" value="1"/>
</dbReference>
<dbReference type="PROSITE" id="PS50162">
    <property type="entry name" value="RECA_2"/>
    <property type="match status" value="1"/>
</dbReference>
<dbReference type="PROSITE" id="PS50163">
    <property type="entry name" value="RECA_3"/>
    <property type="match status" value="1"/>
</dbReference>